<dbReference type="EC" id="2.1.1.182" evidence="1"/>
<dbReference type="EMBL" id="CP000148">
    <property type="protein sequence ID" value="ABB31540.1"/>
    <property type="molecule type" value="Genomic_DNA"/>
</dbReference>
<dbReference type="RefSeq" id="WP_004512062.1">
    <property type="nucleotide sequence ID" value="NC_007517.1"/>
</dbReference>
<dbReference type="SMR" id="Q39W34"/>
<dbReference type="STRING" id="269799.Gmet_1304"/>
<dbReference type="KEGG" id="gme:Gmet_1304"/>
<dbReference type="eggNOG" id="COG0030">
    <property type="taxonomic scope" value="Bacteria"/>
</dbReference>
<dbReference type="HOGENOM" id="CLU_041220_0_1_7"/>
<dbReference type="Proteomes" id="UP000007073">
    <property type="component" value="Chromosome"/>
</dbReference>
<dbReference type="GO" id="GO:0005829">
    <property type="term" value="C:cytosol"/>
    <property type="evidence" value="ECO:0007669"/>
    <property type="project" value="TreeGrafter"/>
</dbReference>
<dbReference type="GO" id="GO:0052908">
    <property type="term" value="F:16S rRNA (adenine(1518)-N(6)/adenine(1519)-N(6))-dimethyltransferase activity"/>
    <property type="evidence" value="ECO:0007669"/>
    <property type="project" value="UniProtKB-EC"/>
</dbReference>
<dbReference type="GO" id="GO:0003723">
    <property type="term" value="F:RNA binding"/>
    <property type="evidence" value="ECO:0007669"/>
    <property type="project" value="UniProtKB-KW"/>
</dbReference>
<dbReference type="CDD" id="cd02440">
    <property type="entry name" value="AdoMet_MTases"/>
    <property type="match status" value="1"/>
</dbReference>
<dbReference type="FunFam" id="3.40.50.150:FF:000023">
    <property type="entry name" value="Ribosomal RNA small subunit methyltransferase A"/>
    <property type="match status" value="1"/>
</dbReference>
<dbReference type="Gene3D" id="1.10.8.100">
    <property type="entry name" value="Ribosomal RNA adenine dimethylase-like, domain 2"/>
    <property type="match status" value="1"/>
</dbReference>
<dbReference type="Gene3D" id="3.40.50.150">
    <property type="entry name" value="Vaccinia Virus protein VP39"/>
    <property type="match status" value="1"/>
</dbReference>
<dbReference type="HAMAP" id="MF_00607">
    <property type="entry name" value="16SrRNA_methyltr_A"/>
    <property type="match status" value="1"/>
</dbReference>
<dbReference type="InterPro" id="IPR001737">
    <property type="entry name" value="KsgA/Erm"/>
</dbReference>
<dbReference type="InterPro" id="IPR023165">
    <property type="entry name" value="rRNA_Ade_diMease-like_C"/>
</dbReference>
<dbReference type="InterPro" id="IPR020596">
    <property type="entry name" value="rRNA_Ade_Mease_Trfase_CS"/>
</dbReference>
<dbReference type="InterPro" id="IPR020598">
    <property type="entry name" value="rRNA_Ade_methylase_Trfase_N"/>
</dbReference>
<dbReference type="InterPro" id="IPR011530">
    <property type="entry name" value="rRNA_adenine_dimethylase"/>
</dbReference>
<dbReference type="InterPro" id="IPR029063">
    <property type="entry name" value="SAM-dependent_MTases_sf"/>
</dbReference>
<dbReference type="NCBIfam" id="TIGR00755">
    <property type="entry name" value="ksgA"/>
    <property type="match status" value="1"/>
</dbReference>
<dbReference type="PANTHER" id="PTHR11727">
    <property type="entry name" value="DIMETHYLADENOSINE TRANSFERASE"/>
    <property type="match status" value="1"/>
</dbReference>
<dbReference type="PANTHER" id="PTHR11727:SF7">
    <property type="entry name" value="DIMETHYLADENOSINE TRANSFERASE-RELATED"/>
    <property type="match status" value="1"/>
</dbReference>
<dbReference type="Pfam" id="PF00398">
    <property type="entry name" value="RrnaAD"/>
    <property type="match status" value="1"/>
</dbReference>
<dbReference type="SMART" id="SM00650">
    <property type="entry name" value="rADc"/>
    <property type="match status" value="1"/>
</dbReference>
<dbReference type="SUPFAM" id="SSF53335">
    <property type="entry name" value="S-adenosyl-L-methionine-dependent methyltransferases"/>
    <property type="match status" value="1"/>
</dbReference>
<dbReference type="PROSITE" id="PS01131">
    <property type="entry name" value="RRNA_A_DIMETH"/>
    <property type="match status" value="1"/>
</dbReference>
<dbReference type="PROSITE" id="PS51689">
    <property type="entry name" value="SAM_RNA_A_N6_MT"/>
    <property type="match status" value="1"/>
</dbReference>
<organism>
    <name type="scientific">Geobacter metallireducens (strain ATCC 53774 / DSM 7210 / GS-15)</name>
    <dbReference type="NCBI Taxonomy" id="269799"/>
    <lineage>
        <taxon>Bacteria</taxon>
        <taxon>Pseudomonadati</taxon>
        <taxon>Thermodesulfobacteriota</taxon>
        <taxon>Desulfuromonadia</taxon>
        <taxon>Geobacterales</taxon>
        <taxon>Geobacteraceae</taxon>
        <taxon>Geobacter</taxon>
    </lineage>
</organism>
<comment type="function">
    <text evidence="1">Specifically dimethylates two adjacent adenosines (A1518 and A1519) in the loop of a conserved hairpin near the 3'-end of 16S rRNA in the 30S particle. May play a critical role in biogenesis of 30S subunits.</text>
</comment>
<comment type="catalytic activity">
    <reaction evidence="1">
        <text>adenosine(1518)/adenosine(1519) in 16S rRNA + 4 S-adenosyl-L-methionine = N(6)-dimethyladenosine(1518)/N(6)-dimethyladenosine(1519) in 16S rRNA + 4 S-adenosyl-L-homocysteine + 4 H(+)</text>
        <dbReference type="Rhea" id="RHEA:19609"/>
        <dbReference type="Rhea" id="RHEA-COMP:10232"/>
        <dbReference type="Rhea" id="RHEA-COMP:10233"/>
        <dbReference type="ChEBI" id="CHEBI:15378"/>
        <dbReference type="ChEBI" id="CHEBI:57856"/>
        <dbReference type="ChEBI" id="CHEBI:59789"/>
        <dbReference type="ChEBI" id="CHEBI:74411"/>
        <dbReference type="ChEBI" id="CHEBI:74493"/>
        <dbReference type="EC" id="2.1.1.182"/>
    </reaction>
</comment>
<comment type="subcellular location">
    <subcellularLocation>
        <location evidence="1">Cytoplasm</location>
    </subcellularLocation>
</comment>
<comment type="similarity">
    <text evidence="1">Belongs to the class I-like SAM-binding methyltransferase superfamily. rRNA adenine N(6)-methyltransferase family. RsmA subfamily.</text>
</comment>
<reference key="1">
    <citation type="journal article" date="2009" name="BMC Microbiol.">
        <title>The genome sequence of Geobacter metallireducens: features of metabolism, physiology and regulation common and dissimilar to Geobacter sulfurreducens.</title>
        <authorList>
            <person name="Aklujkar M."/>
            <person name="Krushkal J."/>
            <person name="DiBartolo G."/>
            <person name="Lapidus A."/>
            <person name="Land M.L."/>
            <person name="Lovley D.R."/>
        </authorList>
    </citation>
    <scope>NUCLEOTIDE SEQUENCE [LARGE SCALE GENOMIC DNA]</scope>
    <source>
        <strain>ATCC 53774 / DSM 7210 / GS-15</strain>
    </source>
</reference>
<feature type="chain" id="PRO_0000257292" description="Ribosomal RNA small subunit methyltransferase A">
    <location>
        <begin position="1"/>
        <end position="275"/>
    </location>
</feature>
<feature type="binding site" evidence="1">
    <location>
        <position position="15"/>
    </location>
    <ligand>
        <name>S-adenosyl-L-methionine</name>
        <dbReference type="ChEBI" id="CHEBI:59789"/>
    </ligand>
</feature>
<feature type="binding site" evidence="1">
    <location>
        <position position="17"/>
    </location>
    <ligand>
        <name>S-adenosyl-L-methionine</name>
        <dbReference type="ChEBI" id="CHEBI:59789"/>
    </ligand>
</feature>
<feature type="binding site" evidence="1">
    <location>
        <position position="42"/>
    </location>
    <ligand>
        <name>S-adenosyl-L-methionine</name>
        <dbReference type="ChEBI" id="CHEBI:59789"/>
    </ligand>
</feature>
<feature type="binding site" evidence="1">
    <location>
        <position position="63"/>
    </location>
    <ligand>
        <name>S-adenosyl-L-methionine</name>
        <dbReference type="ChEBI" id="CHEBI:59789"/>
    </ligand>
</feature>
<feature type="binding site" evidence="1">
    <location>
        <position position="88"/>
    </location>
    <ligand>
        <name>S-adenosyl-L-methionine</name>
        <dbReference type="ChEBI" id="CHEBI:59789"/>
    </ligand>
</feature>
<feature type="binding site" evidence="1">
    <location>
        <position position="111"/>
    </location>
    <ligand>
        <name>S-adenosyl-L-methionine</name>
        <dbReference type="ChEBI" id="CHEBI:59789"/>
    </ligand>
</feature>
<proteinExistence type="inferred from homology"/>
<sequence length="275" mass="30633">MRGEGIRARKALGQNFLVDRHVLARIADIVDMRPDDRILEVGPGKGALTEMLAHRCARLVAVELDTRLVPVLRQAFRDNPRVEIVHGDILEIDLRDLLAYEGGERWKVAANLPYNISTPVLFAFLDNRDLFSRLVLMLQKEVGDRLAASPGTKDYGILSVFFQLHFDVTREMIVRPGSFHPVPKVDSAVLSFVPLEKPRVAVGDEQYFRRLVKGAFSMRRKTLWNCLKNAGLGLSGEQLSEALAVCGIEPGRRGETLSLDEFAALSRAMMALGGK</sequence>
<protein>
    <recommendedName>
        <fullName evidence="1">Ribosomal RNA small subunit methyltransferase A</fullName>
        <ecNumber evidence="1">2.1.1.182</ecNumber>
    </recommendedName>
    <alternativeName>
        <fullName evidence="1">16S rRNA (adenine(1518)-N(6)/adenine(1519)-N(6))-dimethyltransferase</fullName>
    </alternativeName>
    <alternativeName>
        <fullName evidence="1">16S rRNA dimethyladenosine transferase</fullName>
    </alternativeName>
    <alternativeName>
        <fullName evidence="1">16S rRNA dimethylase</fullName>
    </alternativeName>
    <alternativeName>
        <fullName evidence="1">S-adenosylmethionine-6-N', N'-adenosyl(rRNA) dimethyltransferase</fullName>
    </alternativeName>
</protein>
<accession>Q39W34</accession>
<gene>
    <name evidence="1" type="primary">rsmA</name>
    <name evidence="1" type="synonym">ksgA</name>
    <name type="ordered locus">Gmet_1304</name>
</gene>
<evidence type="ECO:0000255" key="1">
    <source>
        <dbReference type="HAMAP-Rule" id="MF_00607"/>
    </source>
</evidence>
<keyword id="KW-0963">Cytoplasm</keyword>
<keyword id="KW-0489">Methyltransferase</keyword>
<keyword id="KW-1185">Reference proteome</keyword>
<keyword id="KW-0694">RNA-binding</keyword>
<keyword id="KW-0698">rRNA processing</keyword>
<keyword id="KW-0949">S-adenosyl-L-methionine</keyword>
<keyword id="KW-0808">Transferase</keyword>
<name>RSMA_GEOMG</name>